<accession>C0RFW7</accession>
<dbReference type="EMBL" id="CP001488">
    <property type="protein sequence ID" value="ACO01789.1"/>
    <property type="molecule type" value="Genomic_DNA"/>
</dbReference>
<dbReference type="RefSeq" id="WP_004686212.1">
    <property type="nucleotide sequence ID" value="NC_012441.1"/>
</dbReference>
<dbReference type="SMR" id="C0RFW7"/>
<dbReference type="KEGG" id="bmi:BMEA_A2141"/>
<dbReference type="HOGENOM" id="CLU_033123_0_0_5"/>
<dbReference type="Proteomes" id="UP000001748">
    <property type="component" value="Chromosome I"/>
</dbReference>
<dbReference type="GO" id="GO:0009376">
    <property type="term" value="C:HslUV protease complex"/>
    <property type="evidence" value="ECO:0007669"/>
    <property type="project" value="UniProtKB-UniRule"/>
</dbReference>
<dbReference type="GO" id="GO:0005524">
    <property type="term" value="F:ATP binding"/>
    <property type="evidence" value="ECO:0007669"/>
    <property type="project" value="UniProtKB-UniRule"/>
</dbReference>
<dbReference type="GO" id="GO:0016887">
    <property type="term" value="F:ATP hydrolysis activity"/>
    <property type="evidence" value="ECO:0007669"/>
    <property type="project" value="InterPro"/>
</dbReference>
<dbReference type="GO" id="GO:0008233">
    <property type="term" value="F:peptidase activity"/>
    <property type="evidence" value="ECO:0007669"/>
    <property type="project" value="InterPro"/>
</dbReference>
<dbReference type="GO" id="GO:0036402">
    <property type="term" value="F:proteasome-activating activity"/>
    <property type="evidence" value="ECO:0007669"/>
    <property type="project" value="UniProtKB-UniRule"/>
</dbReference>
<dbReference type="GO" id="GO:0043335">
    <property type="term" value="P:protein unfolding"/>
    <property type="evidence" value="ECO:0007669"/>
    <property type="project" value="UniProtKB-UniRule"/>
</dbReference>
<dbReference type="GO" id="GO:0051603">
    <property type="term" value="P:proteolysis involved in protein catabolic process"/>
    <property type="evidence" value="ECO:0007669"/>
    <property type="project" value="TreeGrafter"/>
</dbReference>
<dbReference type="CDD" id="cd19498">
    <property type="entry name" value="RecA-like_HslU"/>
    <property type="match status" value="1"/>
</dbReference>
<dbReference type="FunFam" id="3.40.50.300:FF:000213">
    <property type="entry name" value="ATP-dependent protease ATPase subunit HslU"/>
    <property type="match status" value="1"/>
</dbReference>
<dbReference type="FunFam" id="3.40.50.300:FF:000220">
    <property type="entry name" value="ATP-dependent protease ATPase subunit HslU"/>
    <property type="match status" value="1"/>
</dbReference>
<dbReference type="Gene3D" id="1.10.8.60">
    <property type="match status" value="1"/>
</dbReference>
<dbReference type="Gene3D" id="1.10.8.10">
    <property type="entry name" value="DNA helicase RuvA subunit, C-terminal domain"/>
    <property type="match status" value="1"/>
</dbReference>
<dbReference type="Gene3D" id="3.40.50.300">
    <property type="entry name" value="P-loop containing nucleotide triphosphate hydrolases"/>
    <property type="match status" value="1"/>
</dbReference>
<dbReference type="HAMAP" id="MF_00249">
    <property type="entry name" value="HslU"/>
    <property type="match status" value="1"/>
</dbReference>
<dbReference type="InterPro" id="IPR003593">
    <property type="entry name" value="AAA+_ATPase"/>
</dbReference>
<dbReference type="InterPro" id="IPR050052">
    <property type="entry name" value="ATP-dep_Clp_protease_ClpX"/>
</dbReference>
<dbReference type="InterPro" id="IPR003959">
    <property type="entry name" value="ATPase_AAA_core"/>
</dbReference>
<dbReference type="InterPro" id="IPR019489">
    <property type="entry name" value="Clp_ATPase_C"/>
</dbReference>
<dbReference type="InterPro" id="IPR004491">
    <property type="entry name" value="HslU"/>
</dbReference>
<dbReference type="InterPro" id="IPR027417">
    <property type="entry name" value="P-loop_NTPase"/>
</dbReference>
<dbReference type="NCBIfam" id="TIGR00390">
    <property type="entry name" value="hslU"/>
    <property type="match status" value="1"/>
</dbReference>
<dbReference type="NCBIfam" id="NF003544">
    <property type="entry name" value="PRK05201.1"/>
    <property type="match status" value="1"/>
</dbReference>
<dbReference type="PANTHER" id="PTHR48102">
    <property type="entry name" value="ATP-DEPENDENT CLP PROTEASE ATP-BINDING SUBUNIT CLPX-LIKE, MITOCHONDRIAL-RELATED"/>
    <property type="match status" value="1"/>
</dbReference>
<dbReference type="PANTHER" id="PTHR48102:SF3">
    <property type="entry name" value="ATP-DEPENDENT PROTEASE ATPASE SUBUNIT HSLU"/>
    <property type="match status" value="1"/>
</dbReference>
<dbReference type="Pfam" id="PF00004">
    <property type="entry name" value="AAA"/>
    <property type="match status" value="1"/>
</dbReference>
<dbReference type="Pfam" id="PF07724">
    <property type="entry name" value="AAA_2"/>
    <property type="match status" value="1"/>
</dbReference>
<dbReference type="SMART" id="SM00382">
    <property type="entry name" value="AAA"/>
    <property type="match status" value="1"/>
</dbReference>
<dbReference type="SMART" id="SM01086">
    <property type="entry name" value="ClpB_D2-small"/>
    <property type="match status" value="1"/>
</dbReference>
<dbReference type="SUPFAM" id="SSF52540">
    <property type="entry name" value="P-loop containing nucleoside triphosphate hydrolases"/>
    <property type="match status" value="1"/>
</dbReference>
<gene>
    <name evidence="1" type="primary">hslU</name>
    <name type="ordered locus">BMEA_A2141</name>
</gene>
<sequence length="434" mass="47955">MSNFSPREIVSELDRFIIGQKDAKRAVAIALRNRWRRQQLEGQMREEVMPKNILMIGPTGVGKTEISRRLAKLAGAPFVKVEATKFTEVGYVGRDVEQIIRDLVEIAIALVREKRREDVKAKAHLNAEERVLDALVGKTASPVTRDSFRKKLRNGEMDDKEIEIEVSDSGASPNFEIPGMPGANIGVLNISDMLGKAMGGRTKTRKTTVKDSYPILINDESDKLLDQDQIVQEALRVSEDEGIVFIDEIDKIAAREGGSGAGVSREGVQRDLLPLVEGTTVATKYGPVKTDHILFITSGAFHVSKPSDLLPELQGRLPIRVELSALTREDFRRILTETEASLIKQYIALMETEEVKLEFSDDAIDALADIAVDLNATVENIGARRLQTVMEKVLDEISFTAPDKAGATFIIDAAYVKEKIGGLAKNTDLSRFIL</sequence>
<keyword id="KW-0067">ATP-binding</keyword>
<keyword id="KW-0143">Chaperone</keyword>
<keyword id="KW-0963">Cytoplasm</keyword>
<keyword id="KW-0547">Nucleotide-binding</keyword>
<keyword id="KW-0346">Stress response</keyword>
<name>HSLU_BRUMB</name>
<reference key="1">
    <citation type="submission" date="2009-03" db="EMBL/GenBank/DDBJ databases">
        <title>Brucella melitensis ATCC 23457 whole genome shotgun sequencing project.</title>
        <authorList>
            <person name="Setubal J.C."/>
            <person name="Boyle S."/>
            <person name="Crasta O.R."/>
            <person name="Gillespie J.J."/>
            <person name="Kenyon R.W."/>
            <person name="Lu J."/>
            <person name="Mane S."/>
            <person name="Nagrani S."/>
            <person name="Shallom J.M."/>
            <person name="Shallom S."/>
            <person name="Shukla M."/>
            <person name="Snyder E.E."/>
            <person name="Sobral B.W."/>
            <person name="Wattam A.R."/>
            <person name="Will R."/>
            <person name="Williams K."/>
            <person name="Yoo H."/>
            <person name="Munk C."/>
            <person name="Tapia R."/>
            <person name="Han C."/>
            <person name="Detter J.C."/>
            <person name="Bruce D."/>
            <person name="Brettin T.S."/>
        </authorList>
    </citation>
    <scope>NUCLEOTIDE SEQUENCE [LARGE SCALE GENOMIC DNA]</scope>
    <source>
        <strain>ATCC 23457</strain>
    </source>
</reference>
<proteinExistence type="inferred from homology"/>
<comment type="function">
    <text evidence="1">ATPase subunit of a proteasome-like degradation complex; this subunit has chaperone activity. The binding of ATP and its subsequent hydrolysis by HslU are essential for unfolding of protein substrates subsequently hydrolyzed by HslV. HslU recognizes the N-terminal part of its protein substrates and unfolds these before they are guided to HslV for hydrolysis.</text>
</comment>
<comment type="subunit">
    <text evidence="1">A double ring-shaped homohexamer of HslV is capped on each side by a ring-shaped HslU homohexamer. The assembly of the HslU/HslV complex is dependent on binding of ATP.</text>
</comment>
<comment type="subcellular location">
    <subcellularLocation>
        <location evidence="1">Cytoplasm</location>
    </subcellularLocation>
</comment>
<comment type="similarity">
    <text evidence="1">Belongs to the ClpX chaperone family. HslU subfamily.</text>
</comment>
<feature type="chain" id="PRO_1000125429" description="ATP-dependent protease ATPase subunit HslU">
    <location>
        <begin position="1"/>
        <end position="434"/>
    </location>
</feature>
<feature type="binding site" evidence="1">
    <location>
        <position position="18"/>
    </location>
    <ligand>
        <name>ATP</name>
        <dbReference type="ChEBI" id="CHEBI:30616"/>
    </ligand>
</feature>
<feature type="binding site" evidence="1">
    <location>
        <begin position="60"/>
        <end position="65"/>
    </location>
    <ligand>
        <name>ATP</name>
        <dbReference type="ChEBI" id="CHEBI:30616"/>
    </ligand>
</feature>
<feature type="binding site" evidence="1">
    <location>
        <position position="247"/>
    </location>
    <ligand>
        <name>ATP</name>
        <dbReference type="ChEBI" id="CHEBI:30616"/>
    </ligand>
</feature>
<feature type="binding site" evidence="1">
    <location>
        <position position="312"/>
    </location>
    <ligand>
        <name>ATP</name>
        <dbReference type="ChEBI" id="CHEBI:30616"/>
    </ligand>
</feature>
<feature type="binding site" evidence="1">
    <location>
        <position position="384"/>
    </location>
    <ligand>
        <name>ATP</name>
        <dbReference type="ChEBI" id="CHEBI:30616"/>
    </ligand>
</feature>
<organism>
    <name type="scientific">Brucella melitensis biotype 2 (strain ATCC 23457)</name>
    <dbReference type="NCBI Taxonomy" id="546272"/>
    <lineage>
        <taxon>Bacteria</taxon>
        <taxon>Pseudomonadati</taxon>
        <taxon>Pseudomonadota</taxon>
        <taxon>Alphaproteobacteria</taxon>
        <taxon>Hyphomicrobiales</taxon>
        <taxon>Brucellaceae</taxon>
        <taxon>Brucella/Ochrobactrum group</taxon>
        <taxon>Brucella</taxon>
    </lineage>
</organism>
<evidence type="ECO:0000255" key="1">
    <source>
        <dbReference type="HAMAP-Rule" id="MF_00249"/>
    </source>
</evidence>
<protein>
    <recommendedName>
        <fullName evidence="1">ATP-dependent protease ATPase subunit HslU</fullName>
    </recommendedName>
    <alternativeName>
        <fullName evidence="1">Unfoldase HslU</fullName>
    </alternativeName>
</protein>